<accession>B8J867</accession>
<organism>
    <name type="scientific">Anaeromyxobacter dehalogenans (strain 2CP-1 / ATCC BAA-258)</name>
    <dbReference type="NCBI Taxonomy" id="455488"/>
    <lineage>
        <taxon>Bacteria</taxon>
        <taxon>Pseudomonadati</taxon>
        <taxon>Myxococcota</taxon>
        <taxon>Myxococcia</taxon>
        <taxon>Myxococcales</taxon>
        <taxon>Cystobacterineae</taxon>
        <taxon>Anaeromyxobacteraceae</taxon>
        <taxon>Anaeromyxobacter</taxon>
    </lineage>
</organism>
<gene>
    <name evidence="1" type="primary">rplP</name>
    <name type="ordered locus">A2cp1_2025</name>
</gene>
<evidence type="ECO:0000255" key="1">
    <source>
        <dbReference type="HAMAP-Rule" id="MF_01342"/>
    </source>
</evidence>
<evidence type="ECO:0000305" key="2"/>
<sequence>MLQPARTKYRKMQKGRMRGKAYRGSDLAQGEYGLQATECGRLTSRQIEAARVAITRYVKRGGKLWIRVFPDKPITKKPAETRMGTGKGNVEFYVAVIKPGRVLYELAGVDDASAKKAFHLAAHKLPVATKMVKRGETL</sequence>
<feature type="chain" id="PRO_1000166330" description="Large ribosomal subunit protein uL16">
    <location>
        <begin position="1"/>
        <end position="138"/>
    </location>
</feature>
<proteinExistence type="inferred from homology"/>
<comment type="function">
    <text evidence="1">Binds 23S rRNA and is also seen to make contacts with the A and possibly P site tRNAs.</text>
</comment>
<comment type="subunit">
    <text evidence="1">Part of the 50S ribosomal subunit.</text>
</comment>
<comment type="similarity">
    <text evidence="1">Belongs to the universal ribosomal protein uL16 family.</text>
</comment>
<name>RL16_ANAD2</name>
<reference key="1">
    <citation type="submission" date="2009-01" db="EMBL/GenBank/DDBJ databases">
        <title>Complete sequence of Anaeromyxobacter dehalogenans 2CP-1.</title>
        <authorList>
            <person name="Lucas S."/>
            <person name="Copeland A."/>
            <person name="Lapidus A."/>
            <person name="Glavina del Rio T."/>
            <person name="Dalin E."/>
            <person name="Tice H."/>
            <person name="Bruce D."/>
            <person name="Goodwin L."/>
            <person name="Pitluck S."/>
            <person name="Saunders E."/>
            <person name="Brettin T."/>
            <person name="Detter J.C."/>
            <person name="Han C."/>
            <person name="Larimer F."/>
            <person name="Land M."/>
            <person name="Hauser L."/>
            <person name="Kyrpides N."/>
            <person name="Ovchinnikova G."/>
            <person name="Beliaev A.S."/>
            <person name="Richardson P."/>
        </authorList>
    </citation>
    <scope>NUCLEOTIDE SEQUENCE [LARGE SCALE GENOMIC DNA]</scope>
    <source>
        <strain>2CP-1 / ATCC BAA-258</strain>
    </source>
</reference>
<keyword id="KW-0687">Ribonucleoprotein</keyword>
<keyword id="KW-0689">Ribosomal protein</keyword>
<keyword id="KW-0694">RNA-binding</keyword>
<keyword id="KW-0699">rRNA-binding</keyword>
<keyword id="KW-0820">tRNA-binding</keyword>
<protein>
    <recommendedName>
        <fullName evidence="1">Large ribosomal subunit protein uL16</fullName>
    </recommendedName>
    <alternativeName>
        <fullName evidence="2">50S ribosomal protein L16</fullName>
    </alternativeName>
</protein>
<dbReference type="EMBL" id="CP001359">
    <property type="protein sequence ID" value="ACL65366.1"/>
    <property type="molecule type" value="Genomic_DNA"/>
</dbReference>
<dbReference type="RefSeq" id="WP_012525979.1">
    <property type="nucleotide sequence ID" value="NC_011891.1"/>
</dbReference>
<dbReference type="SMR" id="B8J867"/>
<dbReference type="KEGG" id="acp:A2cp1_2025"/>
<dbReference type="HOGENOM" id="CLU_078858_2_1_7"/>
<dbReference type="Proteomes" id="UP000007089">
    <property type="component" value="Chromosome"/>
</dbReference>
<dbReference type="GO" id="GO:0022625">
    <property type="term" value="C:cytosolic large ribosomal subunit"/>
    <property type="evidence" value="ECO:0007669"/>
    <property type="project" value="TreeGrafter"/>
</dbReference>
<dbReference type="GO" id="GO:0019843">
    <property type="term" value="F:rRNA binding"/>
    <property type="evidence" value="ECO:0007669"/>
    <property type="project" value="UniProtKB-UniRule"/>
</dbReference>
<dbReference type="GO" id="GO:0003735">
    <property type="term" value="F:structural constituent of ribosome"/>
    <property type="evidence" value="ECO:0007669"/>
    <property type="project" value="InterPro"/>
</dbReference>
<dbReference type="GO" id="GO:0000049">
    <property type="term" value="F:tRNA binding"/>
    <property type="evidence" value="ECO:0007669"/>
    <property type="project" value="UniProtKB-KW"/>
</dbReference>
<dbReference type="GO" id="GO:0006412">
    <property type="term" value="P:translation"/>
    <property type="evidence" value="ECO:0007669"/>
    <property type="project" value="UniProtKB-UniRule"/>
</dbReference>
<dbReference type="CDD" id="cd01433">
    <property type="entry name" value="Ribosomal_L16_L10e"/>
    <property type="match status" value="1"/>
</dbReference>
<dbReference type="FunFam" id="3.90.1170.10:FF:000001">
    <property type="entry name" value="50S ribosomal protein L16"/>
    <property type="match status" value="1"/>
</dbReference>
<dbReference type="Gene3D" id="3.90.1170.10">
    <property type="entry name" value="Ribosomal protein L10e/L16"/>
    <property type="match status" value="1"/>
</dbReference>
<dbReference type="HAMAP" id="MF_01342">
    <property type="entry name" value="Ribosomal_uL16"/>
    <property type="match status" value="1"/>
</dbReference>
<dbReference type="InterPro" id="IPR047873">
    <property type="entry name" value="Ribosomal_uL16"/>
</dbReference>
<dbReference type="InterPro" id="IPR000114">
    <property type="entry name" value="Ribosomal_uL16_bact-type"/>
</dbReference>
<dbReference type="InterPro" id="IPR020798">
    <property type="entry name" value="Ribosomal_uL16_CS"/>
</dbReference>
<dbReference type="InterPro" id="IPR016180">
    <property type="entry name" value="Ribosomal_uL16_dom"/>
</dbReference>
<dbReference type="InterPro" id="IPR036920">
    <property type="entry name" value="Ribosomal_uL16_sf"/>
</dbReference>
<dbReference type="NCBIfam" id="TIGR01164">
    <property type="entry name" value="rplP_bact"/>
    <property type="match status" value="1"/>
</dbReference>
<dbReference type="PANTHER" id="PTHR12220">
    <property type="entry name" value="50S/60S RIBOSOMAL PROTEIN L16"/>
    <property type="match status" value="1"/>
</dbReference>
<dbReference type="PANTHER" id="PTHR12220:SF13">
    <property type="entry name" value="LARGE RIBOSOMAL SUBUNIT PROTEIN UL16M"/>
    <property type="match status" value="1"/>
</dbReference>
<dbReference type="Pfam" id="PF00252">
    <property type="entry name" value="Ribosomal_L16"/>
    <property type="match status" value="1"/>
</dbReference>
<dbReference type="PRINTS" id="PR00060">
    <property type="entry name" value="RIBOSOMALL16"/>
</dbReference>
<dbReference type="SUPFAM" id="SSF54686">
    <property type="entry name" value="Ribosomal protein L16p/L10e"/>
    <property type="match status" value="1"/>
</dbReference>
<dbReference type="PROSITE" id="PS00586">
    <property type="entry name" value="RIBOSOMAL_L16_1"/>
    <property type="match status" value="1"/>
</dbReference>